<keyword id="KW-0002">3D-structure</keyword>
<keyword id="KW-1003">Cell membrane</keyword>
<keyword id="KW-0903">Direct protein sequencing</keyword>
<keyword id="KW-0449">Lipoprotein</keyword>
<keyword id="KW-0472">Membrane</keyword>
<keyword id="KW-0564">Palmitate</keyword>
<keyword id="KW-0732">Signal</keyword>
<sequence>MLRKKFLYSSAIYATSLASIIAFVAAGCGQTESGSTSDSKPQAETLKHKVSNDSIRIALTDPDNPRWISAQKDIISYVDETEAATSTITKNQDAQNNWLTQQANLSPAPKGFIIAPENGSGVGTAVNTIADKGIPIVAYDRLITGSDKYDWYVSFDNEKVGELQGLSLAAGLLGKEDGAFDSIDQMNEYLKSHMPQETISFYTIAGSQDDNNSQYFYNGAMKVLKELMKNSQNKIIDLSPEGENAVYVPGWNYGTAGQRIQSFLTINKDPAGGNKIKAVGSKPASIFKGFLAPNDGMAEQAITKLKLEGFDTQKIFVTGQDYNDKAKTFIKDGDQNMTIYKPDKVLGKVAVEVLRVLIAKKNKASRSEVENELKAKLPNISFKYDNQTYKVQGKNINTILVSPVIVTKANVDNPDA</sequence>
<comment type="subcellular location">
    <subcellularLocation>
        <location evidence="1">Cell membrane</location>
        <topology evidence="1">Lipid-anchor</topology>
    </subcellularLocation>
</comment>
<comment type="sequence caution" evidence="2">
    <conflict type="erroneous initiation">
        <sequence resource="EMBL-CDS" id="AAZ44597"/>
    </conflict>
</comment>
<comment type="sequence caution" evidence="2">
    <conflict type="erroneous initiation">
        <sequence resource="EMBL-CDS" id="BAA04085"/>
    </conflict>
</comment>
<feature type="signal peptide" evidence="1">
    <location>
        <begin position="1"/>
        <end position="27"/>
    </location>
</feature>
<feature type="chain" id="PRO_0000041981" description="46 kDa surface antigen">
    <location>
        <begin position="28"/>
        <end position="416"/>
    </location>
</feature>
<feature type="lipid moiety-binding region" description="N-palmitoyl cysteine" evidence="1">
    <location>
        <position position="28"/>
    </location>
</feature>
<feature type="lipid moiety-binding region" description="S-diacylglycerol cysteine" evidence="1">
    <location>
        <position position="28"/>
    </location>
</feature>
<feature type="strand" evidence="3">
    <location>
        <begin position="46"/>
        <end position="48"/>
    </location>
</feature>
<feature type="strand" evidence="3">
    <location>
        <begin position="54"/>
        <end position="60"/>
    </location>
</feature>
<feature type="strand" evidence="4">
    <location>
        <begin position="62"/>
        <end position="64"/>
    </location>
</feature>
<feature type="helix" evidence="3">
    <location>
        <begin position="65"/>
        <end position="78"/>
    </location>
</feature>
<feature type="turn" evidence="3">
    <location>
        <begin position="79"/>
        <end position="81"/>
    </location>
</feature>
<feature type="strand" evidence="3">
    <location>
        <begin position="84"/>
        <end position="91"/>
    </location>
</feature>
<feature type="helix" evidence="3">
    <location>
        <begin position="92"/>
        <end position="103"/>
    </location>
</feature>
<feature type="strand" evidence="3">
    <location>
        <begin position="105"/>
        <end position="107"/>
    </location>
</feature>
<feature type="strand" evidence="3">
    <location>
        <begin position="112"/>
        <end position="114"/>
    </location>
</feature>
<feature type="turn" evidence="3">
    <location>
        <begin position="119"/>
        <end position="122"/>
    </location>
</feature>
<feature type="helix" evidence="3">
    <location>
        <begin position="123"/>
        <end position="131"/>
    </location>
</feature>
<feature type="strand" evidence="3">
    <location>
        <begin position="136"/>
        <end position="141"/>
    </location>
</feature>
<feature type="strand" evidence="3">
    <location>
        <begin position="151"/>
        <end position="155"/>
    </location>
</feature>
<feature type="helix" evidence="3">
    <location>
        <begin position="157"/>
        <end position="173"/>
    </location>
</feature>
<feature type="helix" evidence="3">
    <location>
        <begin position="183"/>
        <end position="192"/>
    </location>
</feature>
<feature type="strand" evidence="3">
    <location>
        <begin position="199"/>
        <end position="203"/>
    </location>
</feature>
<feature type="helix" evidence="3">
    <location>
        <begin position="211"/>
        <end position="229"/>
    </location>
</feature>
<feature type="turn" evidence="3">
    <location>
        <begin position="230"/>
        <end position="233"/>
    </location>
</feature>
<feature type="strand" evidence="3">
    <location>
        <begin position="235"/>
        <end position="237"/>
    </location>
</feature>
<feature type="strand" evidence="3">
    <location>
        <begin position="245"/>
        <end position="247"/>
    </location>
</feature>
<feature type="helix" evidence="3">
    <location>
        <begin position="249"/>
        <end position="251"/>
    </location>
</feature>
<feature type="helix" evidence="3">
    <location>
        <begin position="253"/>
        <end position="267"/>
    </location>
</feature>
<feature type="strand" evidence="3">
    <location>
        <begin position="285"/>
        <end position="291"/>
    </location>
</feature>
<feature type="helix" evidence="3">
    <location>
        <begin position="295"/>
        <end position="307"/>
    </location>
</feature>
<feature type="helix" evidence="3">
    <location>
        <begin position="312"/>
        <end position="314"/>
    </location>
</feature>
<feature type="strand" evidence="3">
    <location>
        <begin position="315"/>
        <end position="317"/>
    </location>
</feature>
<feature type="helix" evidence="3">
    <location>
        <begin position="324"/>
        <end position="332"/>
    </location>
</feature>
<feature type="strand" evidence="3">
    <location>
        <begin position="338"/>
        <end position="340"/>
    </location>
</feature>
<feature type="helix" evidence="3">
    <location>
        <begin position="343"/>
        <end position="359"/>
    </location>
</feature>
<feature type="turn" evidence="3">
    <location>
        <begin position="360"/>
        <end position="362"/>
    </location>
</feature>
<feature type="helix" evidence="3">
    <location>
        <begin position="366"/>
        <end position="376"/>
    </location>
</feature>
<feature type="strand" evidence="4">
    <location>
        <begin position="377"/>
        <end position="379"/>
    </location>
</feature>
<feature type="strand" evidence="3">
    <location>
        <begin position="383"/>
        <end position="388"/>
    </location>
</feature>
<feature type="turn" evidence="3">
    <location>
        <begin position="392"/>
        <end position="394"/>
    </location>
</feature>
<feature type="strand" evidence="3">
    <location>
        <begin position="398"/>
        <end position="402"/>
    </location>
</feature>
<feature type="strand" evidence="3">
    <location>
        <begin position="405"/>
        <end position="409"/>
    </location>
</feature>
<organism>
    <name type="scientific">Mesomycoplasma hyopneumoniae (strain J / ATCC 25934 / NCTC 10110)</name>
    <name type="common">Mycoplasma hyopneumoniae</name>
    <dbReference type="NCBI Taxonomy" id="262719"/>
    <lineage>
        <taxon>Bacteria</taxon>
        <taxon>Bacillati</taxon>
        <taxon>Mycoplasmatota</taxon>
        <taxon>Mycoplasmoidales</taxon>
        <taxon>Metamycoplasmataceae</taxon>
        <taxon>Mesomycoplasma</taxon>
    </lineage>
</organism>
<reference key="1">
    <citation type="journal article" date="1995" name="J. Bacteriol.">
        <title>Molecular cloning of a 46-kilodalton surface antigen (P46) gene from Mycoplasma hyopneumoniae: direct evidence of CGG codon usage for arginine.</title>
        <authorList>
            <person name="Futo S."/>
            <person name="Seto Y."/>
            <person name="Mitsuse S."/>
            <person name="Mori Y."/>
            <person name="Suzuki T."/>
            <person name="Kawai K."/>
        </authorList>
    </citation>
    <scope>NUCLEOTIDE SEQUENCE [GENOMIC DNA]</scope>
    <scope>PROTEIN SEQUENCE OF 67-74 AND 338-358</scope>
</reference>
<reference key="2">
    <citation type="journal article" date="2005" name="J. Bacteriol.">
        <title>Swine and poultry pathogens: the complete genome sequences of two strains of Mycoplasma hyopneumoniae and a strain of Mycoplasma synoviae.</title>
        <authorList>
            <person name="Vasconcelos A.T.R."/>
            <person name="Ferreira H.B."/>
            <person name="Bizarro C.V."/>
            <person name="Bonatto S.L."/>
            <person name="Carvalho M.O."/>
            <person name="Pinto P.M."/>
            <person name="Almeida D.F."/>
            <person name="Almeida L.G.P."/>
            <person name="Almeida R."/>
            <person name="Alves-Junior L."/>
            <person name="Assuncao E.N."/>
            <person name="Azevedo V.A.C."/>
            <person name="Bogo M.R."/>
            <person name="Brigido M.M."/>
            <person name="Brocchi M."/>
            <person name="Burity H.A."/>
            <person name="Camargo A.A."/>
            <person name="Camargo S.S."/>
            <person name="Carepo M.S."/>
            <person name="Carraro D.M."/>
            <person name="de Mattos Cascardo J.C."/>
            <person name="Castro L.A."/>
            <person name="Cavalcanti G."/>
            <person name="Chemale G."/>
            <person name="Collevatti R.G."/>
            <person name="Cunha C.W."/>
            <person name="Dallagiovanna B."/>
            <person name="Dambros B.P."/>
            <person name="Dellagostin O.A."/>
            <person name="Falcao C."/>
            <person name="Fantinatti-Garboggini F."/>
            <person name="Felipe M.S.S."/>
            <person name="Fiorentin L."/>
            <person name="Franco G.R."/>
            <person name="Freitas N.S.A."/>
            <person name="Frias D."/>
            <person name="Grangeiro T.B."/>
            <person name="Grisard E.C."/>
            <person name="Guimaraes C.T."/>
            <person name="Hungria M."/>
            <person name="Jardim S.N."/>
            <person name="Krieger M.A."/>
            <person name="Laurino J.P."/>
            <person name="Lima L.F.A."/>
            <person name="Lopes M.I."/>
            <person name="Loreto E.L.S."/>
            <person name="Madeira H.M.F."/>
            <person name="Manfio G.P."/>
            <person name="Maranhao A.Q."/>
            <person name="Martinkovics C.T."/>
            <person name="Medeiros S.R.B."/>
            <person name="Moreira M.A.M."/>
            <person name="Neiva M."/>
            <person name="Ramalho-Neto C.E."/>
            <person name="Nicolas M.F."/>
            <person name="Oliveira S.C."/>
            <person name="Paixao R.F.C."/>
            <person name="Pedrosa F.O."/>
            <person name="Pena S.D.J."/>
            <person name="Pereira M."/>
            <person name="Pereira-Ferrari L."/>
            <person name="Piffer I."/>
            <person name="Pinto L.S."/>
            <person name="Potrich D.P."/>
            <person name="Salim A.C.M."/>
            <person name="Santos F.R."/>
            <person name="Schmitt R."/>
            <person name="Schneider M.P.C."/>
            <person name="Schrank A."/>
            <person name="Schrank I.S."/>
            <person name="Schuck A.F."/>
            <person name="Seuanez H.N."/>
            <person name="Silva D.W."/>
            <person name="Silva R."/>
            <person name="Silva S.C."/>
            <person name="Soares C.M.A."/>
            <person name="Souza K.R.L."/>
            <person name="Souza R.C."/>
            <person name="Staats C.C."/>
            <person name="Steffens M.B.R."/>
            <person name="Teixeira S.M.R."/>
            <person name="Urmenyi T.P."/>
            <person name="Vainstein M.H."/>
            <person name="Zuccherato L.W."/>
            <person name="Simpson A.J.G."/>
            <person name="Zaha A."/>
        </authorList>
    </citation>
    <scope>NUCLEOTIDE SEQUENCE [LARGE SCALE GENOMIC DNA]</scope>
    <source>
        <strain>J / ATCC 25934 / NCTC 10110</strain>
    </source>
</reference>
<accession>P0C0J8</accession>
<accession>P46192</accession>
<accession>Q4A9H4</accession>
<accession>Q600E4</accession>
<dbReference type="EMBL" id="D16682">
    <property type="protein sequence ID" value="BAA04085.1"/>
    <property type="status" value="ALT_INIT"/>
    <property type="molecule type" value="Genomic_DNA"/>
</dbReference>
<dbReference type="EMBL" id="AE017243">
    <property type="protein sequence ID" value="AAZ44597.1"/>
    <property type="status" value="ALT_INIT"/>
    <property type="molecule type" value="Genomic_DNA"/>
</dbReference>
<dbReference type="PIR" id="A56153">
    <property type="entry name" value="A56153"/>
</dbReference>
<dbReference type="PDB" id="6RQG">
    <property type="method" value="X-ray"/>
    <property type="resolution" value="3.10 A"/>
    <property type="chains" value="A/B/C=33-416"/>
</dbReference>
<dbReference type="PDB" id="6RUX">
    <property type="method" value="X-ray"/>
    <property type="resolution" value="2.50 A"/>
    <property type="chains" value="A/B/C=33-416"/>
</dbReference>
<dbReference type="PDB" id="6S3T">
    <property type="method" value="X-ray"/>
    <property type="resolution" value="3.50 A"/>
    <property type="chains" value="A/B/S/T=33-416"/>
</dbReference>
<dbReference type="PDBsum" id="6RQG"/>
<dbReference type="PDBsum" id="6RUX"/>
<dbReference type="PDBsum" id="6S3T"/>
<dbReference type="SMR" id="P0C0J8"/>
<dbReference type="ABCD" id="P0C0J8">
    <property type="antibodies" value="1 sequenced antibody"/>
</dbReference>
<dbReference type="KEGG" id="mhj:MHJ_0511"/>
<dbReference type="eggNOG" id="COG4213">
    <property type="taxonomic scope" value="Bacteria"/>
</dbReference>
<dbReference type="HOGENOM" id="CLU_612270_0_0_14"/>
<dbReference type="Proteomes" id="UP000000548">
    <property type="component" value="Chromosome"/>
</dbReference>
<dbReference type="GO" id="GO:0030288">
    <property type="term" value="C:outer membrane-bounded periplasmic space"/>
    <property type="evidence" value="ECO:0007669"/>
    <property type="project" value="TreeGrafter"/>
</dbReference>
<dbReference type="GO" id="GO:0005886">
    <property type="term" value="C:plasma membrane"/>
    <property type="evidence" value="ECO:0007669"/>
    <property type="project" value="UniProtKB-SubCell"/>
</dbReference>
<dbReference type="GO" id="GO:0030246">
    <property type="term" value="F:carbohydrate binding"/>
    <property type="evidence" value="ECO:0007669"/>
    <property type="project" value="TreeGrafter"/>
</dbReference>
<dbReference type="CDD" id="cd19994">
    <property type="entry name" value="PBP1_ChvE"/>
    <property type="match status" value="1"/>
</dbReference>
<dbReference type="Gene3D" id="3.40.50.2300">
    <property type="match status" value="2"/>
</dbReference>
<dbReference type="InterPro" id="IPR050555">
    <property type="entry name" value="Bact_Solute-Bind_Prot2"/>
</dbReference>
<dbReference type="InterPro" id="IPR028082">
    <property type="entry name" value="Peripla_BP_I"/>
</dbReference>
<dbReference type="InterPro" id="IPR025997">
    <property type="entry name" value="SBP_2_dom"/>
</dbReference>
<dbReference type="InterPro" id="IPR054992">
    <property type="entry name" value="SurfProtP46"/>
</dbReference>
<dbReference type="NCBIfam" id="NF045705">
    <property type="entry name" value="SurfProtP46"/>
    <property type="match status" value="1"/>
</dbReference>
<dbReference type="PANTHER" id="PTHR30036">
    <property type="entry name" value="D-XYLOSE-BINDING PERIPLASMIC PROTEIN"/>
    <property type="match status" value="1"/>
</dbReference>
<dbReference type="PANTHER" id="PTHR30036:SF1">
    <property type="entry name" value="D-XYLOSE-BINDING PERIPLASMIC PROTEIN"/>
    <property type="match status" value="1"/>
</dbReference>
<dbReference type="Pfam" id="PF13407">
    <property type="entry name" value="Peripla_BP_4"/>
    <property type="match status" value="1"/>
</dbReference>
<dbReference type="SUPFAM" id="SSF53822">
    <property type="entry name" value="Periplasmic binding protein-like I"/>
    <property type="match status" value="1"/>
</dbReference>
<dbReference type="PROSITE" id="PS51257">
    <property type="entry name" value="PROKAR_LIPOPROTEIN"/>
    <property type="match status" value="1"/>
</dbReference>
<proteinExistence type="evidence at protein level"/>
<protein>
    <recommendedName>
        <fullName>46 kDa surface antigen</fullName>
    </recommendedName>
    <alternativeName>
        <fullName>p46</fullName>
    </alternativeName>
</protein>
<name>P46_MESHJ</name>
<evidence type="ECO:0000255" key="1">
    <source>
        <dbReference type="PROSITE-ProRule" id="PRU00303"/>
    </source>
</evidence>
<evidence type="ECO:0000305" key="2"/>
<evidence type="ECO:0007829" key="3">
    <source>
        <dbReference type="PDB" id="6RUX"/>
    </source>
</evidence>
<evidence type="ECO:0007829" key="4">
    <source>
        <dbReference type="PDB" id="6S3T"/>
    </source>
</evidence>
<gene>
    <name type="primary">p46</name>
    <name type="ordered locus">MHJ_0511</name>
</gene>